<proteinExistence type="inferred from homology"/>
<reference key="1">
    <citation type="journal article" date="2010" name="J. Bacteriol.">
        <title>Whole genome sequences of two Xylella fastidiosa strains (M12 and M23) causing almond leaf scorch disease in California.</title>
        <authorList>
            <person name="Chen J."/>
            <person name="Xie G."/>
            <person name="Han S."/>
            <person name="Chertkov O."/>
            <person name="Sims D."/>
            <person name="Civerolo E.L."/>
        </authorList>
    </citation>
    <scope>NUCLEOTIDE SEQUENCE [LARGE SCALE GENOMIC DNA]</scope>
    <source>
        <strain>M23</strain>
    </source>
</reference>
<dbReference type="EMBL" id="CP001011">
    <property type="protein sequence ID" value="ACB92866.1"/>
    <property type="molecule type" value="Genomic_DNA"/>
</dbReference>
<dbReference type="RefSeq" id="WP_004091050.1">
    <property type="nucleotide sequence ID" value="NC_010577.1"/>
</dbReference>
<dbReference type="SMR" id="B2I6F6"/>
<dbReference type="GeneID" id="93905187"/>
<dbReference type="KEGG" id="xfn:XfasM23_1455"/>
<dbReference type="HOGENOM" id="CLU_005965_2_1_6"/>
<dbReference type="Proteomes" id="UP000001698">
    <property type="component" value="Chromosome"/>
</dbReference>
<dbReference type="GO" id="GO:0005524">
    <property type="term" value="F:ATP binding"/>
    <property type="evidence" value="ECO:0007669"/>
    <property type="project" value="UniProtKB-UniRule"/>
</dbReference>
<dbReference type="GO" id="GO:0140662">
    <property type="term" value="F:ATP-dependent protein folding chaperone"/>
    <property type="evidence" value="ECO:0007669"/>
    <property type="project" value="InterPro"/>
</dbReference>
<dbReference type="GO" id="GO:0051082">
    <property type="term" value="F:unfolded protein binding"/>
    <property type="evidence" value="ECO:0007669"/>
    <property type="project" value="InterPro"/>
</dbReference>
<dbReference type="CDD" id="cd10234">
    <property type="entry name" value="ASKHA_NBD_HSP70_DnaK-like"/>
    <property type="match status" value="1"/>
</dbReference>
<dbReference type="FunFam" id="2.60.34.10:FF:000014">
    <property type="entry name" value="Chaperone protein DnaK HSP70"/>
    <property type="match status" value="1"/>
</dbReference>
<dbReference type="FunFam" id="3.30.30.30:FF:000003">
    <property type="entry name" value="Heat shock protein 9"/>
    <property type="match status" value="1"/>
</dbReference>
<dbReference type="FunFam" id="1.20.1270.10:FF:000001">
    <property type="entry name" value="Molecular chaperone DnaK"/>
    <property type="match status" value="1"/>
</dbReference>
<dbReference type="FunFam" id="3.30.420.40:FF:000004">
    <property type="entry name" value="Molecular chaperone DnaK"/>
    <property type="match status" value="1"/>
</dbReference>
<dbReference type="FunFam" id="3.90.640.10:FF:000003">
    <property type="entry name" value="Molecular chaperone DnaK"/>
    <property type="match status" value="1"/>
</dbReference>
<dbReference type="Gene3D" id="1.20.1270.10">
    <property type="match status" value="1"/>
</dbReference>
<dbReference type="Gene3D" id="3.30.420.40">
    <property type="match status" value="2"/>
</dbReference>
<dbReference type="Gene3D" id="3.90.640.10">
    <property type="entry name" value="Actin, Chain A, domain 4"/>
    <property type="match status" value="1"/>
</dbReference>
<dbReference type="Gene3D" id="2.60.34.10">
    <property type="entry name" value="Substrate Binding Domain Of DNAk, Chain A, domain 1"/>
    <property type="match status" value="1"/>
</dbReference>
<dbReference type="HAMAP" id="MF_00332">
    <property type="entry name" value="DnaK"/>
    <property type="match status" value="1"/>
</dbReference>
<dbReference type="InterPro" id="IPR043129">
    <property type="entry name" value="ATPase_NBD"/>
</dbReference>
<dbReference type="InterPro" id="IPR012725">
    <property type="entry name" value="Chaperone_DnaK"/>
</dbReference>
<dbReference type="InterPro" id="IPR018181">
    <property type="entry name" value="Heat_shock_70_CS"/>
</dbReference>
<dbReference type="InterPro" id="IPR029048">
    <property type="entry name" value="HSP70_C_sf"/>
</dbReference>
<dbReference type="InterPro" id="IPR029047">
    <property type="entry name" value="HSP70_peptide-bd_sf"/>
</dbReference>
<dbReference type="InterPro" id="IPR013126">
    <property type="entry name" value="Hsp_70_fam"/>
</dbReference>
<dbReference type="NCBIfam" id="NF001413">
    <property type="entry name" value="PRK00290.1"/>
    <property type="match status" value="1"/>
</dbReference>
<dbReference type="NCBIfam" id="NF003520">
    <property type="entry name" value="PRK05183.1"/>
    <property type="match status" value="1"/>
</dbReference>
<dbReference type="NCBIfam" id="TIGR02350">
    <property type="entry name" value="prok_dnaK"/>
    <property type="match status" value="1"/>
</dbReference>
<dbReference type="PANTHER" id="PTHR19375">
    <property type="entry name" value="HEAT SHOCK PROTEIN 70KDA"/>
    <property type="match status" value="1"/>
</dbReference>
<dbReference type="Pfam" id="PF00012">
    <property type="entry name" value="HSP70"/>
    <property type="match status" value="1"/>
</dbReference>
<dbReference type="PRINTS" id="PR00301">
    <property type="entry name" value="HEATSHOCK70"/>
</dbReference>
<dbReference type="SUPFAM" id="SSF53067">
    <property type="entry name" value="Actin-like ATPase domain"/>
    <property type="match status" value="2"/>
</dbReference>
<dbReference type="SUPFAM" id="SSF100920">
    <property type="entry name" value="Heat shock protein 70kD (HSP70), peptide-binding domain"/>
    <property type="match status" value="1"/>
</dbReference>
<dbReference type="PROSITE" id="PS00297">
    <property type="entry name" value="HSP70_1"/>
    <property type="match status" value="1"/>
</dbReference>
<dbReference type="PROSITE" id="PS00329">
    <property type="entry name" value="HSP70_2"/>
    <property type="match status" value="1"/>
</dbReference>
<dbReference type="PROSITE" id="PS01036">
    <property type="entry name" value="HSP70_3"/>
    <property type="match status" value="1"/>
</dbReference>
<sequence length="638" mass="68444">MGKIIGIDLGTTNSCLAIIEGGKGRVIENSEGDRTTPSIVAYTKDGEVLVGAAAKRQAVTNPKNTFYAVKRLIGRKFGDAEVQKDLDLVPYKITQHDNGDAWVATADGKKLAPQEISAKVLEKMKKTAEDFLGEKVTEAVITVPAYFNDSQRQATKDAGRIAGLDVKRIINEPTAAALAYGLDKKGGDRKIAVYDLGGGTFDVSIIEIAEVDGEKQFEVLATNGDTFLGGEDFDKRVIDYLVDEFNKDQGIDLRKDPLALQRLKDAAERAKIELSSSQQTEVNLPYITADASGPKHLNIKLTRAKLEALVDDLVRKSIEPCRIALNDAGLRTSDVQEVILVGGQTRMPKVQQAVADFFGKEPRKDVNPDEAVALGAAIQGGVLAGDVKDVLLLDVTPLSLGIETMGGVFTKIIEKNTTIPTKASQVFSTAEDGQSAVTVHVLQGEREQARFNKSLAKFDLAGIEPAPRGQPQIEVSFDIDANGILHVSAKDKKTNKEQKVEVKAGSGLSDSEIQQMVADAEAHREEDKKFQELVQARNHADGLIHSTRSAIKEHGSKVGGELIGRVEASLAELEAAVKGDDKNQIEAKSKTLEEVAQSLHMAATAEQQSGSTGAGAGASAKVDDVVDAEFTEVKADKK</sequence>
<keyword id="KW-0067">ATP-binding</keyword>
<keyword id="KW-0143">Chaperone</keyword>
<keyword id="KW-0547">Nucleotide-binding</keyword>
<keyword id="KW-0597">Phosphoprotein</keyword>
<keyword id="KW-0346">Stress response</keyword>
<comment type="function">
    <text evidence="1">Acts as a chaperone.</text>
</comment>
<comment type="induction">
    <text evidence="1">By stress conditions e.g. heat shock.</text>
</comment>
<comment type="similarity">
    <text evidence="1">Belongs to the heat shock protein 70 family.</text>
</comment>
<protein>
    <recommendedName>
        <fullName evidence="1">Chaperone protein DnaK</fullName>
    </recommendedName>
    <alternativeName>
        <fullName evidence="1">HSP70</fullName>
    </alternativeName>
    <alternativeName>
        <fullName evidence="1">Heat shock 70 kDa protein</fullName>
    </alternativeName>
    <alternativeName>
        <fullName evidence="1">Heat shock protein 70</fullName>
    </alternativeName>
</protein>
<gene>
    <name evidence="1" type="primary">dnaK</name>
    <name type="ordered locus">XfasM23_1455</name>
</gene>
<feature type="chain" id="PRO_1000119779" description="Chaperone protein DnaK">
    <location>
        <begin position="1"/>
        <end position="638"/>
    </location>
</feature>
<feature type="region of interest" description="Disordered" evidence="2">
    <location>
        <begin position="598"/>
        <end position="621"/>
    </location>
</feature>
<feature type="modified residue" description="Phosphothreonine; by autocatalysis" evidence="1">
    <location>
        <position position="200"/>
    </location>
</feature>
<evidence type="ECO:0000255" key="1">
    <source>
        <dbReference type="HAMAP-Rule" id="MF_00332"/>
    </source>
</evidence>
<evidence type="ECO:0000256" key="2">
    <source>
        <dbReference type="SAM" id="MobiDB-lite"/>
    </source>
</evidence>
<accession>B2I6F6</accession>
<organism>
    <name type="scientific">Xylella fastidiosa (strain M23)</name>
    <dbReference type="NCBI Taxonomy" id="405441"/>
    <lineage>
        <taxon>Bacteria</taxon>
        <taxon>Pseudomonadati</taxon>
        <taxon>Pseudomonadota</taxon>
        <taxon>Gammaproteobacteria</taxon>
        <taxon>Lysobacterales</taxon>
        <taxon>Lysobacteraceae</taxon>
        <taxon>Xylella</taxon>
    </lineage>
</organism>
<name>DNAK_XYLF2</name>